<organism>
    <name type="scientific">Methanospirillum hungatei JF-1 (strain ATCC 27890 / DSM 864 / NBRC 100397 / JF-1)</name>
    <dbReference type="NCBI Taxonomy" id="323259"/>
    <lineage>
        <taxon>Archaea</taxon>
        <taxon>Methanobacteriati</taxon>
        <taxon>Methanobacteriota</taxon>
        <taxon>Stenosarchaea group</taxon>
        <taxon>Methanomicrobia</taxon>
        <taxon>Methanomicrobiales</taxon>
        <taxon>Methanospirillaceae</taxon>
        <taxon>Methanospirillum</taxon>
    </lineage>
</organism>
<keyword id="KW-0378">Hydrolase</keyword>
<keyword id="KW-0479">Metal-binding</keyword>
<keyword id="KW-1185">Reference proteome</keyword>
<keyword id="KW-0862">Zinc</keyword>
<comment type="function">
    <text evidence="1">D-aminoacyl-tRNA deacylase with broad substrate specificity. By recycling D-aminoacyl-tRNA to D-amino acids and free tRNA molecules, this enzyme counteracts the toxicity associated with the formation of D-aminoacyl-tRNA entities in vivo.</text>
</comment>
<comment type="catalytic activity">
    <reaction evidence="1">
        <text>a D-aminoacyl-tRNA + H2O = a tRNA + a D-alpha-amino acid + H(+)</text>
        <dbReference type="Rhea" id="RHEA:13953"/>
        <dbReference type="Rhea" id="RHEA-COMP:10123"/>
        <dbReference type="Rhea" id="RHEA-COMP:10124"/>
        <dbReference type="ChEBI" id="CHEBI:15377"/>
        <dbReference type="ChEBI" id="CHEBI:15378"/>
        <dbReference type="ChEBI" id="CHEBI:59871"/>
        <dbReference type="ChEBI" id="CHEBI:78442"/>
        <dbReference type="ChEBI" id="CHEBI:79333"/>
        <dbReference type="EC" id="3.1.1.96"/>
    </reaction>
</comment>
<comment type="catalytic activity">
    <reaction evidence="1">
        <text>glycyl-tRNA(Ala) + H2O = tRNA(Ala) + glycine + H(+)</text>
        <dbReference type="Rhea" id="RHEA:53744"/>
        <dbReference type="Rhea" id="RHEA-COMP:9657"/>
        <dbReference type="Rhea" id="RHEA-COMP:13640"/>
        <dbReference type="ChEBI" id="CHEBI:15377"/>
        <dbReference type="ChEBI" id="CHEBI:15378"/>
        <dbReference type="ChEBI" id="CHEBI:57305"/>
        <dbReference type="ChEBI" id="CHEBI:78442"/>
        <dbReference type="ChEBI" id="CHEBI:78522"/>
        <dbReference type="EC" id="3.1.1.96"/>
    </reaction>
</comment>
<comment type="cofactor">
    <cofactor evidence="1">
        <name>Zn(2+)</name>
        <dbReference type="ChEBI" id="CHEBI:29105"/>
    </cofactor>
    <text evidence="1">Binds 2 Zn(2+) ions per subunit.</text>
</comment>
<comment type="subunit">
    <text evidence="1">Monomer.</text>
</comment>
<comment type="similarity">
    <text evidence="1">Belongs to the DtdA deacylase family.</text>
</comment>
<reference key="1">
    <citation type="journal article" date="2016" name="Stand. Genomic Sci.">
        <title>Complete genome sequence of Methanospirillum hungatei type strain JF1.</title>
        <authorList>
            <person name="Gunsalus R.P."/>
            <person name="Cook L.E."/>
            <person name="Crable B."/>
            <person name="Rohlin L."/>
            <person name="McDonald E."/>
            <person name="Mouttaki H."/>
            <person name="Sieber J.R."/>
            <person name="Poweleit N."/>
            <person name="Zhou H."/>
            <person name="Lapidus A.L."/>
            <person name="Daligault H.E."/>
            <person name="Land M."/>
            <person name="Gilna P."/>
            <person name="Ivanova N."/>
            <person name="Kyrpides N."/>
            <person name="Culley D.E."/>
            <person name="McInerney M.J."/>
        </authorList>
    </citation>
    <scope>NUCLEOTIDE SEQUENCE [LARGE SCALE GENOMIC DNA]</scope>
    <source>
        <strain>ATCC 27890 / DSM 864 / NBRC 100397 / JF-1</strain>
    </source>
</reference>
<sequence>MTPKEQSPTTLLISSRKDPAGSLIHEELYSFLEDDKRAHSHIRHWHAEERLIYLDGPSLPHDADRILFLSRHASERPRPVLTVHVTGNFGSADYGGRPNTLTPAATGLMHALINRLIIHAPEGYEVMYEATHHGPTDIPLPSCFIELGSTEKEWNDRIAARAVAQAVLDALLMDTSSVIPLAGFGGTHYAQRQTEITKLTRGGFGHIMPTRDIPHLTDALFQDIISSTGAFAIYIDGKSMSGKEERMITGLADKHTIPILGQGDLMRLFDLPFSEYMSIRNLAESLIPGSSIVLHTILEMPAPVSLTIPGELVDEVMKVAAEEFISALDSFPIVHMTGRGKACHPVFITDAAFSGRISDELIHLCVTLLQDRYTCSFEGDSLIIKKLRFDPKKAKNLGIPSGPLYSELMAGKPVEVGDSVIYPEMVMTETEKRIHIPQRQAR</sequence>
<protein>
    <recommendedName>
        <fullName evidence="1">D-aminoacyl-tRNA deacylase</fullName>
        <ecNumber evidence="1">3.1.1.96</ecNumber>
    </recommendedName>
    <alternativeName>
        <fullName>D-tyrosyl-tRNA(Tyr) deacylase</fullName>
    </alternativeName>
</protein>
<name>DTDA_METHJ</name>
<feature type="chain" id="PRO_0000345224" description="D-aminoacyl-tRNA deacylase">
    <location>
        <begin position="1"/>
        <end position="442"/>
    </location>
</feature>
<gene>
    <name evidence="1" type="primary">dtdA</name>
    <name type="ordered locus">Mhun_0661</name>
</gene>
<accession>Q2FPX3</accession>
<proteinExistence type="inferred from homology"/>
<dbReference type="EC" id="3.1.1.96" evidence="1"/>
<dbReference type="EMBL" id="CP000254">
    <property type="protein sequence ID" value="ABD40417.1"/>
    <property type="molecule type" value="Genomic_DNA"/>
</dbReference>
<dbReference type="RefSeq" id="WP_011447701.1">
    <property type="nucleotide sequence ID" value="NC_007796.1"/>
</dbReference>
<dbReference type="SMR" id="Q2FPX3"/>
<dbReference type="FunCoup" id="Q2FPX3">
    <property type="interactions" value="3"/>
</dbReference>
<dbReference type="STRING" id="323259.Mhun_0661"/>
<dbReference type="EnsemblBacteria" id="ABD40417">
    <property type="protein sequence ID" value="ABD40417"/>
    <property type="gene ID" value="Mhun_0661"/>
</dbReference>
<dbReference type="GeneID" id="3923578"/>
<dbReference type="KEGG" id="mhu:Mhun_0661"/>
<dbReference type="eggNOG" id="arCOG01616">
    <property type="taxonomic scope" value="Archaea"/>
</dbReference>
<dbReference type="HOGENOM" id="CLU_610619_0_0_2"/>
<dbReference type="InParanoid" id="Q2FPX3"/>
<dbReference type="OrthoDB" id="9863at2157"/>
<dbReference type="Proteomes" id="UP000001941">
    <property type="component" value="Chromosome"/>
</dbReference>
<dbReference type="GO" id="GO:0051499">
    <property type="term" value="F:D-aminoacyl-tRNA deacylase activity"/>
    <property type="evidence" value="ECO:0007669"/>
    <property type="project" value="UniProtKB-UniRule"/>
</dbReference>
<dbReference type="GO" id="GO:0008270">
    <property type="term" value="F:zinc ion binding"/>
    <property type="evidence" value="ECO:0007669"/>
    <property type="project" value="UniProtKB-UniRule"/>
</dbReference>
<dbReference type="GO" id="GO:0019478">
    <property type="term" value="P:D-amino acid catabolic process"/>
    <property type="evidence" value="ECO:0007669"/>
    <property type="project" value="UniProtKB-UniRule"/>
</dbReference>
<dbReference type="Gene3D" id="3.40.50.10700">
    <property type="entry name" value="AF0625-like"/>
    <property type="match status" value="1"/>
</dbReference>
<dbReference type="Gene3D" id="3.40.630.50">
    <property type="entry name" value="AF0625-like"/>
    <property type="match status" value="1"/>
</dbReference>
<dbReference type="HAMAP" id="MF_00562">
    <property type="entry name" value="Deacylase_DtdA"/>
    <property type="match status" value="1"/>
</dbReference>
<dbReference type="InterPro" id="IPR018033">
    <property type="entry name" value="Deacylase_DtdA_archaea"/>
</dbReference>
<dbReference type="InterPro" id="IPR007508">
    <property type="entry name" value="DtdA"/>
</dbReference>
<dbReference type="NCBIfam" id="NF011436">
    <property type="entry name" value="PRK14866.1-3"/>
    <property type="match status" value="1"/>
</dbReference>
<dbReference type="PANTHER" id="PTHR34667">
    <property type="entry name" value="D-AMINOACYL-TRNA DEACYLASE"/>
    <property type="match status" value="1"/>
</dbReference>
<dbReference type="PANTHER" id="PTHR34667:SF1">
    <property type="entry name" value="D-AMINOACYL-TRNA DEACYLASE"/>
    <property type="match status" value="1"/>
</dbReference>
<dbReference type="Pfam" id="PF04414">
    <property type="entry name" value="tRNA_deacylase"/>
    <property type="match status" value="1"/>
</dbReference>
<dbReference type="SUPFAM" id="SSF142535">
    <property type="entry name" value="AF0625-like"/>
    <property type="match status" value="1"/>
</dbReference>
<evidence type="ECO:0000255" key="1">
    <source>
        <dbReference type="HAMAP-Rule" id="MF_00562"/>
    </source>
</evidence>